<reference key="1">
    <citation type="journal article" date="2003" name="Nat. Genet.">
        <title>Comparative analysis of the genome sequences of Bordetella pertussis, Bordetella parapertussis and Bordetella bronchiseptica.</title>
        <authorList>
            <person name="Parkhill J."/>
            <person name="Sebaihia M."/>
            <person name="Preston A."/>
            <person name="Murphy L.D."/>
            <person name="Thomson N.R."/>
            <person name="Harris D.E."/>
            <person name="Holden M.T.G."/>
            <person name="Churcher C.M."/>
            <person name="Bentley S.D."/>
            <person name="Mungall K.L."/>
            <person name="Cerdeno-Tarraga A.-M."/>
            <person name="Temple L."/>
            <person name="James K.D."/>
            <person name="Harris B."/>
            <person name="Quail M.A."/>
            <person name="Achtman M."/>
            <person name="Atkin R."/>
            <person name="Baker S."/>
            <person name="Basham D."/>
            <person name="Bason N."/>
            <person name="Cherevach I."/>
            <person name="Chillingworth T."/>
            <person name="Collins M."/>
            <person name="Cronin A."/>
            <person name="Davis P."/>
            <person name="Doggett J."/>
            <person name="Feltwell T."/>
            <person name="Goble A."/>
            <person name="Hamlin N."/>
            <person name="Hauser H."/>
            <person name="Holroyd S."/>
            <person name="Jagels K."/>
            <person name="Leather S."/>
            <person name="Moule S."/>
            <person name="Norberczak H."/>
            <person name="O'Neil S."/>
            <person name="Ormond D."/>
            <person name="Price C."/>
            <person name="Rabbinowitsch E."/>
            <person name="Rutter S."/>
            <person name="Sanders M."/>
            <person name="Saunders D."/>
            <person name="Seeger K."/>
            <person name="Sharp S."/>
            <person name="Simmonds M."/>
            <person name="Skelton J."/>
            <person name="Squares R."/>
            <person name="Squares S."/>
            <person name="Stevens K."/>
            <person name="Unwin L."/>
            <person name="Whitehead S."/>
            <person name="Barrell B.G."/>
            <person name="Maskell D.J."/>
        </authorList>
    </citation>
    <scope>NUCLEOTIDE SEQUENCE [LARGE SCALE GENOMIC DNA]</scope>
    <source>
        <strain>12822 / ATCC BAA-587 / NCTC 13253</strain>
    </source>
</reference>
<name>HIS3_BORPA</name>
<dbReference type="EC" id="3.5.4.19" evidence="1"/>
<dbReference type="EMBL" id="BX640436">
    <property type="protein sequence ID" value="CAE39552.1"/>
    <property type="molecule type" value="Genomic_DNA"/>
</dbReference>
<dbReference type="RefSeq" id="WP_003815804.1">
    <property type="nucleotide sequence ID" value="NC_002928.3"/>
</dbReference>
<dbReference type="SMR" id="Q7W2X8"/>
<dbReference type="GeneID" id="93206070"/>
<dbReference type="KEGG" id="bpa:BPP4273"/>
<dbReference type="HOGENOM" id="CLU_048577_5_0_4"/>
<dbReference type="UniPathway" id="UPA00031">
    <property type="reaction ID" value="UER00008"/>
</dbReference>
<dbReference type="Proteomes" id="UP000001421">
    <property type="component" value="Chromosome"/>
</dbReference>
<dbReference type="GO" id="GO:0005737">
    <property type="term" value="C:cytoplasm"/>
    <property type="evidence" value="ECO:0007669"/>
    <property type="project" value="UniProtKB-SubCell"/>
</dbReference>
<dbReference type="GO" id="GO:0000287">
    <property type="term" value="F:magnesium ion binding"/>
    <property type="evidence" value="ECO:0007669"/>
    <property type="project" value="UniProtKB-UniRule"/>
</dbReference>
<dbReference type="GO" id="GO:0004635">
    <property type="term" value="F:phosphoribosyl-AMP cyclohydrolase activity"/>
    <property type="evidence" value="ECO:0007669"/>
    <property type="project" value="UniProtKB-UniRule"/>
</dbReference>
<dbReference type="GO" id="GO:0008270">
    <property type="term" value="F:zinc ion binding"/>
    <property type="evidence" value="ECO:0007669"/>
    <property type="project" value="UniProtKB-UniRule"/>
</dbReference>
<dbReference type="GO" id="GO:0000105">
    <property type="term" value="P:L-histidine biosynthetic process"/>
    <property type="evidence" value="ECO:0007669"/>
    <property type="project" value="UniProtKB-UniRule"/>
</dbReference>
<dbReference type="FunFam" id="3.10.20.810:FF:000001">
    <property type="entry name" value="Histidine biosynthesis bifunctional protein HisIE"/>
    <property type="match status" value="1"/>
</dbReference>
<dbReference type="Gene3D" id="3.10.20.810">
    <property type="entry name" value="Phosphoribosyl-AMP cyclohydrolase"/>
    <property type="match status" value="1"/>
</dbReference>
<dbReference type="HAMAP" id="MF_01021">
    <property type="entry name" value="HisI"/>
    <property type="match status" value="1"/>
</dbReference>
<dbReference type="InterPro" id="IPR026660">
    <property type="entry name" value="PRA-CH"/>
</dbReference>
<dbReference type="InterPro" id="IPR002496">
    <property type="entry name" value="PRib_AMP_CycHydrolase_dom"/>
</dbReference>
<dbReference type="InterPro" id="IPR038019">
    <property type="entry name" value="PRib_AMP_CycHydrolase_sf"/>
</dbReference>
<dbReference type="NCBIfam" id="NF000768">
    <property type="entry name" value="PRK00051.1"/>
    <property type="match status" value="1"/>
</dbReference>
<dbReference type="PANTHER" id="PTHR42945">
    <property type="entry name" value="HISTIDINE BIOSYNTHESIS BIFUNCTIONAL PROTEIN"/>
    <property type="match status" value="1"/>
</dbReference>
<dbReference type="PANTHER" id="PTHR42945:SF1">
    <property type="entry name" value="HISTIDINE BIOSYNTHESIS BIFUNCTIONAL PROTEIN HIS7"/>
    <property type="match status" value="1"/>
</dbReference>
<dbReference type="Pfam" id="PF01502">
    <property type="entry name" value="PRA-CH"/>
    <property type="match status" value="1"/>
</dbReference>
<dbReference type="SUPFAM" id="SSF141734">
    <property type="entry name" value="HisI-like"/>
    <property type="match status" value="1"/>
</dbReference>
<keyword id="KW-0028">Amino-acid biosynthesis</keyword>
<keyword id="KW-0963">Cytoplasm</keyword>
<keyword id="KW-0368">Histidine biosynthesis</keyword>
<keyword id="KW-0378">Hydrolase</keyword>
<keyword id="KW-0460">Magnesium</keyword>
<keyword id="KW-0479">Metal-binding</keyword>
<keyword id="KW-0862">Zinc</keyword>
<protein>
    <recommendedName>
        <fullName evidence="1">Phosphoribosyl-AMP cyclohydrolase</fullName>
        <shortName evidence="1">PRA-CH</shortName>
        <ecNumber evidence="1">3.5.4.19</ecNumber>
    </recommendedName>
</protein>
<accession>Q7W2X8</accession>
<comment type="function">
    <text evidence="1">Catalyzes the hydrolysis of the adenine ring of phosphoribosyl-AMP.</text>
</comment>
<comment type="catalytic activity">
    <reaction evidence="1">
        <text>1-(5-phospho-beta-D-ribosyl)-5'-AMP + H2O = 1-(5-phospho-beta-D-ribosyl)-5-[(5-phospho-beta-D-ribosylamino)methylideneamino]imidazole-4-carboxamide</text>
        <dbReference type="Rhea" id="RHEA:20049"/>
        <dbReference type="ChEBI" id="CHEBI:15377"/>
        <dbReference type="ChEBI" id="CHEBI:58435"/>
        <dbReference type="ChEBI" id="CHEBI:59457"/>
        <dbReference type="EC" id="3.5.4.19"/>
    </reaction>
</comment>
<comment type="cofactor">
    <cofactor evidence="1">
        <name>Mg(2+)</name>
        <dbReference type="ChEBI" id="CHEBI:18420"/>
    </cofactor>
    <text evidence="1">Binds 1 Mg(2+) ion per subunit.</text>
</comment>
<comment type="cofactor">
    <cofactor evidence="1">
        <name>Zn(2+)</name>
        <dbReference type="ChEBI" id="CHEBI:29105"/>
    </cofactor>
    <text evidence="1">Binds 1 zinc ion per subunit.</text>
</comment>
<comment type="pathway">
    <text evidence="1">Amino-acid biosynthesis; L-histidine biosynthesis; L-histidine from 5-phospho-alpha-D-ribose 1-diphosphate: step 3/9.</text>
</comment>
<comment type="subunit">
    <text evidence="1">Homodimer.</text>
</comment>
<comment type="subcellular location">
    <subcellularLocation>
        <location evidence="1">Cytoplasm</location>
    </subcellularLocation>
</comment>
<comment type="similarity">
    <text evidence="1">Belongs to the PRA-CH family.</text>
</comment>
<feature type="chain" id="PRO_0000136463" description="Phosphoribosyl-AMP cyclohydrolase">
    <location>
        <begin position="1"/>
        <end position="134"/>
    </location>
</feature>
<feature type="binding site" evidence="1">
    <location>
        <position position="80"/>
    </location>
    <ligand>
        <name>Mg(2+)</name>
        <dbReference type="ChEBI" id="CHEBI:18420"/>
    </ligand>
</feature>
<feature type="binding site" evidence="1">
    <location>
        <position position="81"/>
    </location>
    <ligand>
        <name>Zn(2+)</name>
        <dbReference type="ChEBI" id="CHEBI:29105"/>
        <note>ligand shared between dimeric partners</note>
    </ligand>
</feature>
<feature type="binding site" evidence="1">
    <location>
        <position position="82"/>
    </location>
    <ligand>
        <name>Mg(2+)</name>
        <dbReference type="ChEBI" id="CHEBI:18420"/>
    </ligand>
</feature>
<feature type="binding site" evidence="1">
    <location>
        <position position="84"/>
    </location>
    <ligand>
        <name>Mg(2+)</name>
        <dbReference type="ChEBI" id="CHEBI:18420"/>
    </ligand>
</feature>
<feature type="binding site" evidence="1">
    <location>
        <position position="98"/>
    </location>
    <ligand>
        <name>Zn(2+)</name>
        <dbReference type="ChEBI" id="CHEBI:29105"/>
        <note>ligand shared between dimeric partners</note>
    </ligand>
</feature>
<feature type="binding site" evidence="1">
    <location>
        <position position="105"/>
    </location>
    <ligand>
        <name>Zn(2+)</name>
        <dbReference type="ChEBI" id="CHEBI:29105"/>
        <note>ligand shared between dimeric partners</note>
    </ligand>
</feature>
<gene>
    <name evidence="1" type="primary">hisI</name>
    <name type="ordered locus">BPP4273</name>
</gene>
<sequence>MNTEPTWMAEVVFDENGLIPAIAQDAETGQILMVAWMNREALAETAATGRAVYWSRSRQRLWRKGEESGHAQDVHELRLDCDGDVILLKVHQNGGIACHTGRASCFYRRLEGTASQAEWITIDPVLKDPELIYK</sequence>
<organism>
    <name type="scientific">Bordetella parapertussis (strain 12822 / ATCC BAA-587 / NCTC 13253)</name>
    <dbReference type="NCBI Taxonomy" id="257311"/>
    <lineage>
        <taxon>Bacteria</taxon>
        <taxon>Pseudomonadati</taxon>
        <taxon>Pseudomonadota</taxon>
        <taxon>Betaproteobacteria</taxon>
        <taxon>Burkholderiales</taxon>
        <taxon>Alcaligenaceae</taxon>
        <taxon>Bordetella</taxon>
    </lineage>
</organism>
<evidence type="ECO:0000255" key="1">
    <source>
        <dbReference type="HAMAP-Rule" id="MF_01021"/>
    </source>
</evidence>
<proteinExistence type="inferred from homology"/>